<keyword id="KW-0002">3D-structure</keyword>
<keyword id="KW-1003">Cell membrane</keyword>
<keyword id="KW-0903">Direct protein sequencing</keyword>
<keyword id="KW-1015">Disulfide bond</keyword>
<keyword id="KW-0272">Extracellular matrix</keyword>
<keyword id="KW-0325">Glycoprotein</keyword>
<keyword id="KW-0472">Membrane</keyword>
<keyword id="KW-0597">Phosphoprotein</keyword>
<keyword id="KW-0654">Proteoglycan</keyword>
<keyword id="KW-0675">Receptor</keyword>
<keyword id="KW-1185">Reference proteome</keyword>
<keyword id="KW-0964">Secreted</keyword>
<keyword id="KW-0732">Signal</keyword>
<keyword id="KW-0812">Transmembrane</keyword>
<keyword id="KW-1133">Transmembrane helix</keyword>
<accession>P26342</accession>
<dbReference type="EMBL" id="M77809">
    <property type="protein sequence ID" value="AAA40813.1"/>
    <property type="molecule type" value="mRNA"/>
</dbReference>
<dbReference type="EMBL" id="M80784">
    <property type="protein sequence ID" value="AAA42236.1"/>
    <property type="molecule type" value="mRNA"/>
</dbReference>
<dbReference type="PIR" id="A41220">
    <property type="entry name" value="A41220"/>
</dbReference>
<dbReference type="RefSeq" id="NP_058952.1">
    <property type="nucleotide sequence ID" value="NM_017256.1"/>
</dbReference>
<dbReference type="PDB" id="3QW9">
    <property type="method" value="X-ray"/>
    <property type="resolution" value="2.00 A"/>
    <property type="chains" value="A/B=591-763"/>
</dbReference>
<dbReference type="PDB" id="8DC0">
    <property type="method" value="X-ray"/>
    <property type="resolution" value="1.93 A"/>
    <property type="chains" value="A=590-757"/>
</dbReference>
<dbReference type="PDB" id="9FDY">
    <property type="method" value="EM"/>
    <property type="resolution" value="3.40 A"/>
    <property type="chains" value="C=31-360"/>
</dbReference>
<dbReference type="PDBsum" id="3QW9"/>
<dbReference type="PDBsum" id="8DC0"/>
<dbReference type="PDBsum" id="9FDY"/>
<dbReference type="EMDB" id="EMD-50326"/>
<dbReference type="EMDB" id="EMD-50333"/>
<dbReference type="SMR" id="P26342"/>
<dbReference type="DIP" id="DIP-6248N"/>
<dbReference type="FunCoup" id="P26342">
    <property type="interactions" value="411"/>
</dbReference>
<dbReference type="STRING" id="10116.ENSRNOP00000002867"/>
<dbReference type="GlyCosmos" id="P26342">
    <property type="glycosylation" value="8 sites, No reported glycans"/>
</dbReference>
<dbReference type="GlyGen" id="P26342">
    <property type="glycosylation" value="8 sites"/>
</dbReference>
<dbReference type="iPTMnet" id="P26342"/>
<dbReference type="PhosphoSitePlus" id="P26342"/>
<dbReference type="PaxDb" id="10116-ENSRNOP00000002867"/>
<dbReference type="Ensembl" id="ENSRNOT00000002867.5">
    <property type="protein sequence ID" value="ENSRNOP00000002867.3"/>
    <property type="gene ID" value="ENSRNOG00000002093.5"/>
</dbReference>
<dbReference type="GeneID" id="29610"/>
<dbReference type="KEGG" id="rno:29610"/>
<dbReference type="UCSC" id="RGD:61821">
    <property type="organism name" value="rat"/>
</dbReference>
<dbReference type="AGR" id="RGD:61821"/>
<dbReference type="CTD" id="7049"/>
<dbReference type="RGD" id="61821">
    <property type="gene designation" value="Tgfbr3"/>
</dbReference>
<dbReference type="eggNOG" id="ENOG502QWNZ">
    <property type="taxonomic scope" value="Eukaryota"/>
</dbReference>
<dbReference type="GeneTree" id="ENSGT00530000063861"/>
<dbReference type="HOGENOM" id="CLU_018613_0_0_1"/>
<dbReference type="InParanoid" id="P26342"/>
<dbReference type="OMA" id="VPQRECV"/>
<dbReference type="OrthoDB" id="6420824at2759"/>
<dbReference type="PhylomeDB" id="P26342"/>
<dbReference type="TreeFam" id="TF337375"/>
<dbReference type="Reactome" id="R-RNO-1502540">
    <property type="pathway name" value="Signaling by Activin"/>
</dbReference>
<dbReference type="Reactome" id="R-RNO-190370">
    <property type="pathway name" value="FGFR1b ligand binding and activation"/>
</dbReference>
<dbReference type="Reactome" id="R-RNO-190373">
    <property type="pathway name" value="FGFR1c ligand binding and activation"/>
</dbReference>
<dbReference type="Reactome" id="R-RNO-201451">
    <property type="pathway name" value="Signaling by BMP"/>
</dbReference>
<dbReference type="Reactome" id="R-RNO-2173789">
    <property type="pathway name" value="TGF-beta receptor signaling activates SMADs"/>
</dbReference>
<dbReference type="Reactome" id="R-RNO-9839383">
    <property type="pathway name" value="TGFBR3 PTM regulation"/>
</dbReference>
<dbReference type="Reactome" id="R-RNO-9839389">
    <property type="pathway name" value="TGFBR3 regulates TGF-beta signaling"/>
</dbReference>
<dbReference type="Reactome" id="R-RNO-9839397">
    <property type="pathway name" value="TGFBR3 regulates FGF2 signaling"/>
</dbReference>
<dbReference type="Reactome" id="R-RNO-9839406">
    <property type="pathway name" value="TGFBR3 regulates activin signaling"/>
</dbReference>
<dbReference type="EvolutionaryTrace" id="P26342"/>
<dbReference type="PRO" id="PR:P26342"/>
<dbReference type="Proteomes" id="UP000002494">
    <property type="component" value="Chromosome 14"/>
</dbReference>
<dbReference type="Bgee" id="ENSRNOG00000002093">
    <property type="expression patterns" value="Expressed in lung and 19 other cell types or tissues"/>
</dbReference>
<dbReference type="GO" id="GO:0009986">
    <property type="term" value="C:cell surface"/>
    <property type="evidence" value="ECO:0000266"/>
    <property type="project" value="RGD"/>
</dbReference>
<dbReference type="GO" id="GO:0062023">
    <property type="term" value="C:collagen-containing extracellular matrix"/>
    <property type="evidence" value="ECO:0000304"/>
    <property type="project" value="BHF-UCL"/>
</dbReference>
<dbReference type="GO" id="GO:0005737">
    <property type="term" value="C:cytoplasm"/>
    <property type="evidence" value="ECO:0000266"/>
    <property type="project" value="RGD"/>
</dbReference>
<dbReference type="GO" id="GO:0005783">
    <property type="term" value="C:endoplasmic reticulum"/>
    <property type="evidence" value="ECO:0000266"/>
    <property type="project" value="RGD"/>
</dbReference>
<dbReference type="GO" id="GO:0009897">
    <property type="term" value="C:external side of plasma membrane"/>
    <property type="evidence" value="ECO:0000266"/>
    <property type="project" value="RGD"/>
</dbReference>
<dbReference type="GO" id="GO:0005615">
    <property type="term" value="C:extracellular space"/>
    <property type="evidence" value="ECO:0000314"/>
    <property type="project" value="RGD"/>
</dbReference>
<dbReference type="GO" id="GO:0034673">
    <property type="term" value="C:inhibin-betaglycan-ActRII complex"/>
    <property type="evidence" value="ECO:0000266"/>
    <property type="project" value="RGD"/>
</dbReference>
<dbReference type="GO" id="GO:0016020">
    <property type="term" value="C:membrane"/>
    <property type="evidence" value="ECO:0000314"/>
    <property type="project" value="BHF-UCL"/>
</dbReference>
<dbReference type="GO" id="GO:0043235">
    <property type="term" value="C:receptor complex"/>
    <property type="evidence" value="ECO:0000314"/>
    <property type="project" value="BHF-UCL"/>
</dbReference>
<dbReference type="GO" id="GO:0048185">
    <property type="term" value="F:activin binding"/>
    <property type="evidence" value="ECO:0000314"/>
    <property type="project" value="RGD"/>
</dbReference>
<dbReference type="GO" id="GO:0036122">
    <property type="term" value="F:BMP binding"/>
    <property type="evidence" value="ECO:0000266"/>
    <property type="project" value="RGD"/>
</dbReference>
<dbReference type="GO" id="GO:0015026">
    <property type="term" value="F:coreceptor activity"/>
    <property type="evidence" value="ECO:0000266"/>
    <property type="project" value="RGD"/>
</dbReference>
<dbReference type="GO" id="GO:0017134">
    <property type="term" value="F:fibroblast growth factor binding"/>
    <property type="evidence" value="ECO:0000314"/>
    <property type="project" value="RGD"/>
</dbReference>
<dbReference type="GO" id="GO:0005539">
    <property type="term" value="F:glycosaminoglycan binding"/>
    <property type="evidence" value="ECO:0000266"/>
    <property type="project" value="RGD"/>
</dbReference>
<dbReference type="GO" id="GO:0008201">
    <property type="term" value="F:heparin binding"/>
    <property type="evidence" value="ECO:0000314"/>
    <property type="project" value="BHF-UCL"/>
</dbReference>
<dbReference type="GO" id="GO:0030165">
    <property type="term" value="F:PDZ domain binding"/>
    <property type="evidence" value="ECO:0000266"/>
    <property type="project" value="RGD"/>
</dbReference>
<dbReference type="GO" id="GO:0046332">
    <property type="term" value="F:SMAD binding"/>
    <property type="evidence" value="ECO:0000266"/>
    <property type="project" value="RGD"/>
</dbReference>
<dbReference type="GO" id="GO:0050431">
    <property type="term" value="F:transforming growth factor beta binding"/>
    <property type="evidence" value="ECO:0000314"/>
    <property type="project" value="BHF-UCL"/>
</dbReference>
<dbReference type="GO" id="GO:0005024">
    <property type="term" value="F:transforming growth factor beta receptor activity"/>
    <property type="evidence" value="ECO:0000266"/>
    <property type="project" value="RGD"/>
</dbReference>
<dbReference type="GO" id="GO:0070123">
    <property type="term" value="F:transforming growth factor beta receptor activity, type III"/>
    <property type="evidence" value="ECO:0000314"/>
    <property type="project" value="BHF-UCL"/>
</dbReference>
<dbReference type="GO" id="GO:0005160">
    <property type="term" value="F:transforming growth factor beta receptor binding"/>
    <property type="evidence" value="ECO:0000314"/>
    <property type="project" value="BHF-UCL"/>
</dbReference>
<dbReference type="GO" id="GO:0004888">
    <property type="term" value="F:transmembrane signaling receptor activity"/>
    <property type="evidence" value="ECO:0000266"/>
    <property type="project" value="RGD"/>
</dbReference>
<dbReference type="GO" id="GO:0005114">
    <property type="term" value="F:type II transforming growth factor beta receptor binding"/>
    <property type="evidence" value="ECO:0000266"/>
    <property type="project" value="RGD"/>
</dbReference>
<dbReference type="GO" id="GO:0031100">
    <property type="term" value="P:animal organ regeneration"/>
    <property type="evidence" value="ECO:0000270"/>
    <property type="project" value="RGD"/>
</dbReference>
<dbReference type="GO" id="GO:0060561">
    <property type="term" value="P:apoptotic process involved in morphogenesis"/>
    <property type="evidence" value="ECO:0000266"/>
    <property type="project" value="RGD"/>
</dbReference>
<dbReference type="GO" id="GO:0001824">
    <property type="term" value="P:blastocyst development"/>
    <property type="evidence" value="ECO:0000266"/>
    <property type="project" value="RGD"/>
</dbReference>
<dbReference type="GO" id="GO:0001568">
    <property type="term" value="P:blood vessel development"/>
    <property type="evidence" value="ECO:0000266"/>
    <property type="project" value="RGD"/>
</dbReference>
<dbReference type="GO" id="GO:0001974">
    <property type="term" value="P:blood vessel remodeling"/>
    <property type="evidence" value="ECO:0000266"/>
    <property type="project" value="RGD"/>
</dbReference>
<dbReference type="GO" id="GO:0030509">
    <property type="term" value="P:BMP signaling pathway"/>
    <property type="evidence" value="ECO:0000266"/>
    <property type="project" value="RGD"/>
</dbReference>
<dbReference type="GO" id="GO:0060317">
    <property type="term" value="P:cardiac epithelial to mesenchymal transition"/>
    <property type="evidence" value="ECO:0000266"/>
    <property type="project" value="RGD"/>
</dbReference>
<dbReference type="GO" id="GO:0060038">
    <property type="term" value="P:cardiac muscle cell proliferation"/>
    <property type="evidence" value="ECO:0000266"/>
    <property type="project" value="RGD"/>
</dbReference>
<dbReference type="GO" id="GO:0016477">
    <property type="term" value="P:cell migration"/>
    <property type="evidence" value="ECO:0000318"/>
    <property type="project" value="GO_Central"/>
</dbReference>
<dbReference type="GO" id="GO:0008283">
    <property type="term" value="P:cell population proliferation"/>
    <property type="evidence" value="ECO:0000266"/>
    <property type="project" value="RGD"/>
</dbReference>
<dbReference type="GO" id="GO:0032963">
    <property type="term" value="P:collagen metabolic process"/>
    <property type="evidence" value="ECO:0000266"/>
    <property type="project" value="RGD"/>
</dbReference>
<dbReference type="GO" id="GO:0060318">
    <property type="term" value="P:definitive erythrocyte differentiation"/>
    <property type="evidence" value="ECO:0000266"/>
    <property type="project" value="RGD"/>
</dbReference>
<dbReference type="GO" id="GO:0060216">
    <property type="term" value="P:definitive hemopoiesis"/>
    <property type="evidence" value="ECO:0000266"/>
    <property type="project" value="RGD"/>
</dbReference>
<dbReference type="GO" id="GO:0060939">
    <property type="term" value="P:epicardium-derived cardiac fibroblast cell development"/>
    <property type="evidence" value="ECO:0000266"/>
    <property type="project" value="RGD"/>
</dbReference>
<dbReference type="GO" id="GO:0001837">
    <property type="term" value="P:epithelial to mesenchymal transition"/>
    <property type="evidence" value="ECO:0000266"/>
    <property type="project" value="RGD"/>
</dbReference>
<dbReference type="GO" id="GO:0060347">
    <property type="term" value="P:heart trabecula formation"/>
    <property type="evidence" value="ECO:0000266"/>
    <property type="project" value="RGD"/>
</dbReference>
<dbReference type="GO" id="GO:0061384">
    <property type="term" value="P:heart trabecula morphogenesis"/>
    <property type="evidence" value="ECO:0000266"/>
    <property type="project" value="RGD"/>
</dbReference>
<dbReference type="GO" id="GO:0006955">
    <property type="term" value="P:immune response"/>
    <property type="evidence" value="ECO:0000266"/>
    <property type="project" value="RGD"/>
</dbReference>
<dbReference type="GO" id="GO:0001701">
    <property type="term" value="P:in utero embryonic development"/>
    <property type="evidence" value="ECO:0000266"/>
    <property type="project" value="RGD"/>
</dbReference>
<dbReference type="GO" id="GO:0035556">
    <property type="term" value="P:intracellular signal transduction"/>
    <property type="evidence" value="ECO:0000266"/>
    <property type="project" value="RGD"/>
</dbReference>
<dbReference type="GO" id="GO:0001889">
    <property type="term" value="P:liver development"/>
    <property type="evidence" value="ECO:0000266"/>
    <property type="project" value="RGD"/>
</dbReference>
<dbReference type="GO" id="GO:0003150">
    <property type="term" value="P:muscular septum morphogenesis"/>
    <property type="evidence" value="ECO:0000266"/>
    <property type="project" value="RGD"/>
</dbReference>
<dbReference type="GO" id="GO:1902338">
    <property type="term" value="P:negative regulation of apoptotic process involved in morphogenesis"/>
    <property type="evidence" value="ECO:0000266"/>
    <property type="project" value="RGD"/>
</dbReference>
<dbReference type="GO" id="GO:0043124">
    <property type="term" value="P:negative regulation of canonical NF-kappaB signal transduction"/>
    <property type="evidence" value="ECO:0000266"/>
    <property type="project" value="RGD"/>
</dbReference>
<dbReference type="GO" id="GO:0030336">
    <property type="term" value="P:negative regulation of cell migration"/>
    <property type="evidence" value="ECO:0000266"/>
    <property type="project" value="RGD"/>
</dbReference>
<dbReference type="GO" id="GO:0010633">
    <property type="term" value="P:negative regulation of epithelial cell migration"/>
    <property type="evidence" value="ECO:0000266"/>
    <property type="project" value="RGD"/>
</dbReference>
<dbReference type="GO" id="GO:0050680">
    <property type="term" value="P:negative regulation of epithelial cell proliferation"/>
    <property type="evidence" value="ECO:0000266"/>
    <property type="project" value="RGD"/>
</dbReference>
<dbReference type="GO" id="GO:0010719">
    <property type="term" value="P:negative regulation of epithelial to mesenchymal transition"/>
    <property type="evidence" value="ECO:0000266"/>
    <property type="project" value="RGD"/>
</dbReference>
<dbReference type="GO" id="GO:1901202">
    <property type="term" value="P:negative regulation of extracellular matrix assembly"/>
    <property type="evidence" value="ECO:0000266"/>
    <property type="project" value="RGD"/>
</dbReference>
<dbReference type="GO" id="GO:0010629">
    <property type="term" value="P:negative regulation of gene expression"/>
    <property type="evidence" value="ECO:0000266"/>
    <property type="project" value="RGD"/>
</dbReference>
<dbReference type="GO" id="GO:0060392">
    <property type="term" value="P:negative regulation of SMAD protein signal transduction"/>
    <property type="evidence" value="ECO:0000266"/>
    <property type="project" value="RGD"/>
</dbReference>
<dbReference type="GO" id="GO:0030512">
    <property type="term" value="P:negative regulation of transforming growth factor beta receptor signaling pathway"/>
    <property type="evidence" value="ECO:0000314"/>
    <property type="project" value="RGD"/>
</dbReference>
<dbReference type="GO" id="GO:0001649">
    <property type="term" value="P:osteoblast differentiation"/>
    <property type="evidence" value="ECO:0000266"/>
    <property type="project" value="RGD"/>
</dbReference>
<dbReference type="GO" id="GO:0003151">
    <property type="term" value="P:outflow tract morphogenesis"/>
    <property type="evidence" value="ECO:0000266"/>
    <property type="project" value="RGD"/>
</dbReference>
<dbReference type="GO" id="GO:0030513">
    <property type="term" value="P:positive regulation of BMP signaling pathway"/>
    <property type="evidence" value="ECO:0000266"/>
    <property type="project" value="RGD"/>
</dbReference>
<dbReference type="GO" id="GO:0060045">
    <property type="term" value="P:positive regulation of cardiac muscle cell proliferation"/>
    <property type="evidence" value="ECO:0000266"/>
    <property type="project" value="RGD"/>
</dbReference>
<dbReference type="GO" id="GO:0090050">
    <property type="term" value="P:positive regulation of cell migration involved in sprouting angiogenesis"/>
    <property type="evidence" value="ECO:0000266"/>
    <property type="project" value="RGD"/>
</dbReference>
<dbReference type="GO" id="GO:0008284">
    <property type="term" value="P:positive regulation of cell population proliferation"/>
    <property type="evidence" value="ECO:0000266"/>
    <property type="project" value="RGD"/>
</dbReference>
<dbReference type="GO" id="GO:0010628">
    <property type="term" value="P:positive regulation of gene expression"/>
    <property type="evidence" value="ECO:0000266"/>
    <property type="project" value="RGD"/>
</dbReference>
<dbReference type="GO" id="GO:0060391">
    <property type="term" value="P:positive regulation of SMAD protein signal transduction"/>
    <property type="evidence" value="ECO:0000266"/>
    <property type="project" value="RGD"/>
</dbReference>
<dbReference type="GO" id="GO:0030511">
    <property type="term" value="P:positive regulation of transforming growth factor beta receptor signaling pathway"/>
    <property type="evidence" value="ECO:0000315"/>
    <property type="project" value="RGD"/>
</dbReference>
<dbReference type="GO" id="GO:0065003">
    <property type="term" value="P:protein-containing complex assembly"/>
    <property type="evidence" value="ECO:0000314"/>
    <property type="project" value="RGD"/>
</dbReference>
<dbReference type="GO" id="GO:0017015">
    <property type="term" value="P:regulation of transforming growth factor beta receptor signaling pathway"/>
    <property type="evidence" value="ECO:0000318"/>
    <property type="project" value="GO_Central"/>
</dbReference>
<dbReference type="GO" id="GO:0032354">
    <property type="term" value="P:response to follicle-stimulating hormone"/>
    <property type="evidence" value="ECO:0000266"/>
    <property type="project" value="RGD"/>
</dbReference>
<dbReference type="GO" id="GO:0001666">
    <property type="term" value="P:response to hypoxia"/>
    <property type="evidence" value="ECO:0000270"/>
    <property type="project" value="RGD"/>
</dbReference>
<dbReference type="GO" id="GO:0034699">
    <property type="term" value="P:response to luteinizing hormone"/>
    <property type="evidence" value="ECO:0000266"/>
    <property type="project" value="RGD"/>
</dbReference>
<dbReference type="GO" id="GO:0034695">
    <property type="term" value="P:response to prostaglandin E"/>
    <property type="evidence" value="ECO:0000266"/>
    <property type="project" value="RGD"/>
</dbReference>
<dbReference type="GO" id="GO:0060021">
    <property type="term" value="P:roof of mouth development"/>
    <property type="evidence" value="ECO:0000266"/>
    <property type="project" value="RGD"/>
</dbReference>
<dbReference type="GO" id="GO:0062009">
    <property type="term" value="P:secondary palate development"/>
    <property type="evidence" value="ECO:0000266"/>
    <property type="project" value="RGD"/>
</dbReference>
<dbReference type="GO" id="GO:0007165">
    <property type="term" value="P:signal transduction"/>
    <property type="evidence" value="ECO:0000303"/>
    <property type="project" value="BHF-UCL"/>
</dbReference>
<dbReference type="GO" id="GO:0007181">
    <property type="term" value="P:transforming growth factor beta receptor complex assembly"/>
    <property type="evidence" value="ECO:0000315"/>
    <property type="project" value="RGD"/>
</dbReference>
<dbReference type="GO" id="GO:0007179">
    <property type="term" value="P:transforming growth factor beta receptor signaling pathway"/>
    <property type="evidence" value="ECO:0000266"/>
    <property type="project" value="RGD"/>
</dbReference>
<dbReference type="GO" id="GO:0001570">
    <property type="term" value="P:vasculogenesis"/>
    <property type="evidence" value="ECO:0000266"/>
    <property type="project" value="RGD"/>
</dbReference>
<dbReference type="GO" id="GO:0060979">
    <property type="term" value="P:vasculogenesis involved in coronary vascular morphogenesis"/>
    <property type="evidence" value="ECO:0000266"/>
    <property type="project" value="RGD"/>
</dbReference>
<dbReference type="GO" id="GO:0055010">
    <property type="term" value="P:ventricular cardiac muscle tissue morphogenesis"/>
    <property type="evidence" value="ECO:0000266"/>
    <property type="project" value="RGD"/>
</dbReference>
<dbReference type="GO" id="GO:0003223">
    <property type="term" value="P:ventricular compact myocardium morphogenesis"/>
    <property type="evidence" value="ECO:0000266"/>
    <property type="project" value="RGD"/>
</dbReference>
<dbReference type="GO" id="GO:0060412">
    <property type="term" value="P:ventricular septum morphogenesis"/>
    <property type="evidence" value="ECO:0000266"/>
    <property type="project" value="RGD"/>
</dbReference>
<dbReference type="FunFam" id="2.60.40.3210:FF:000008">
    <property type="entry name" value="Transforming growth factor beta receptor 3"/>
    <property type="match status" value="1"/>
</dbReference>
<dbReference type="FunFam" id="2.60.40.4100:FF:000003">
    <property type="entry name" value="Transforming growth factor beta receptor type 3"/>
    <property type="match status" value="1"/>
</dbReference>
<dbReference type="Gene3D" id="2.60.40.4100">
    <property type="entry name" value="Zona pellucida, ZP-C domain"/>
    <property type="match status" value="1"/>
</dbReference>
<dbReference type="Gene3D" id="2.60.40.3210">
    <property type="entry name" value="Zona pellucida, ZP-N domain"/>
    <property type="match status" value="1"/>
</dbReference>
<dbReference type="InterPro" id="IPR055355">
    <property type="entry name" value="ZP-C"/>
</dbReference>
<dbReference type="InterPro" id="IPR042235">
    <property type="entry name" value="ZP-C_dom"/>
</dbReference>
<dbReference type="InterPro" id="IPR055356">
    <property type="entry name" value="ZP-N"/>
</dbReference>
<dbReference type="InterPro" id="IPR048290">
    <property type="entry name" value="ZP_chr"/>
</dbReference>
<dbReference type="InterPro" id="IPR001507">
    <property type="entry name" value="ZP_dom"/>
</dbReference>
<dbReference type="InterPro" id="IPR017977">
    <property type="entry name" value="ZP_dom_CS"/>
</dbReference>
<dbReference type="PANTHER" id="PTHR14002">
    <property type="entry name" value="ENDOGLIN/TGF-BETA RECEPTOR TYPE III"/>
    <property type="match status" value="1"/>
</dbReference>
<dbReference type="PANTHER" id="PTHR14002:SF7">
    <property type="entry name" value="TRANSFORMING GROWTH FACTOR BETA RECEPTOR TYPE 3"/>
    <property type="match status" value="1"/>
</dbReference>
<dbReference type="Pfam" id="PF00100">
    <property type="entry name" value="Zona_pellucida"/>
    <property type="match status" value="1"/>
</dbReference>
<dbReference type="Pfam" id="PF23344">
    <property type="entry name" value="ZP-N"/>
    <property type="match status" value="1"/>
</dbReference>
<dbReference type="PRINTS" id="PR00023">
    <property type="entry name" value="ZPELLUCIDA"/>
</dbReference>
<dbReference type="SMART" id="SM00241">
    <property type="entry name" value="ZP"/>
    <property type="match status" value="1"/>
</dbReference>
<dbReference type="PROSITE" id="PS00682">
    <property type="entry name" value="ZP_1"/>
    <property type="match status" value="1"/>
</dbReference>
<dbReference type="PROSITE" id="PS51034">
    <property type="entry name" value="ZP_2"/>
    <property type="match status" value="1"/>
</dbReference>
<reference key="1">
    <citation type="journal article" date="1991" name="Cell">
        <title>Structure and expression of the membrane proteoglycan betaglycan, a component of the TGF-beta receptor system.</title>
        <authorList>
            <person name="Lopez-Casillas F."/>
            <person name="Cheifetz S."/>
            <person name="Doody J."/>
            <person name="Andres J.L."/>
            <person name="Lane W.S."/>
            <person name="Massague J."/>
        </authorList>
    </citation>
    <scope>NUCLEOTIDE SEQUENCE [MRNA]</scope>
    <scope>PARTIAL PROTEIN SEQUENCE</scope>
    <scope>SUBCELLULAR LOCATION</scope>
</reference>
<reference key="2">
    <citation type="journal article" date="1991" name="Cell">
        <title>Expression cloning and characterization of the TGF-beta type III receptor.</title>
        <authorList>
            <person name="Wang X.-F."/>
            <person name="Lin H.Y."/>
            <person name="Ng-Eaton E."/>
            <person name="Downward J."/>
            <person name="Lodish H.F."/>
            <person name="Weinberg R.A."/>
        </authorList>
    </citation>
    <scope>NUCLEOTIDE SEQUENCE [MRNA]</scope>
    <scope>PROTEIN SEQUENCE OF 378-388 AND 427-434</scope>
</reference>
<reference key="3">
    <citation type="journal article" date="2011" name="Proc. Natl. Acad. Sci. U.S.A.">
        <title>Structure of betaglycan zona pellucida (ZP)-C domain provides insights into ZP-mediated protein polymerization and TGF-beta binding.</title>
        <authorList>
            <person name="Lin S.J."/>
            <person name="Hu Y."/>
            <person name="Zhu J."/>
            <person name="Woodruff T.K."/>
            <person name="Jardetzky T.S."/>
        </authorList>
    </citation>
    <scope>X-RAY CRYSTALLOGRAPHY (2.0 ANGSTROMS) OF 591-763</scope>
    <scope>GLYCOSYLATION AT ASN-591 AND ASN-698</scope>
    <scope>DISULFIDE BONDS</scope>
    <scope>FUNCTION</scope>
</reference>
<evidence type="ECO:0000250" key="1"/>
<evidence type="ECO:0000250" key="2">
    <source>
        <dbReference type="UniProtKB" id="O88393"/>
    </source>
</evidence>
<evidence type="ECO:0000250" key="3">
    <source>
        <dbReference type="UniProtKB" id="Q03167"/>
    </source>
</evidence>
<evidence type="ECO:0000255" key="4"/>
<evidence type="ECO:0000255" key="5">
    <source>
        <dbReference type="PROSITE-ProRule" id="PRU00375"/>
    </source>
</evidence>
<evidence type="ECO:0000256" key="6">
    <source>
        <dbReference type="SAM" id="MobiDB-lite"/>
    </source>
</evidence>
<evidence type="ECO:0000269" key="7">
    <source>
    </source>
</evidence>
<evidence type="ECO:0000269" key="8">
    <source>
    </source>
</evidence>
<evidence type="ECO:0000305" key="9"/>
<evidence type="ECO:0000305" key="10">
    <source>
    </source>
</evidence>
<evidence type="ECO:0007829" key="11">
    <source>
        <dbReference type="PDB" id="3QW9"/>
    </source>
</evidence>
<evidence type="ECO:0007829" key="12">
    <source>
        <dbReference type="PDB" id="8DC0"/>
    </source>
</evidence>
<protein>
    <recommendedName>
        <fullName>Transforming growth factor beta receptor type 3</fullName>
        <shortName>TGF-beta receptor type 3</shortName>
        <shortName>TGFR-3</shortName>
    </recommendedName>
    <alternativeName>
        <fullName>Betaglycan</fullName>
    </alternativeName>
    <alternativeName>
        <fullName>Transforming growth factor beta receptor III</fullName>
        <shortName>TGF-beta receptor type III</shortName>
    </alternativeName>
</protein>
<gene>
    <name type="primary">Tgfbr3</name>
</gene>
<name>TGBR3_RAT</name>
<comment type="function">
    <text evidence="3 8">Cell surface receptor that regulates diverse cellular processes including cell proliferation, differentiation, migration, and apoptosis. Initiates BMP, inhibin, and TGF-beta signaling pathways by interacting with different ligands including TGFB1, BMP2, BMP5, BMP7 or GDF5. Alternatively, acts as a cell surface coreceptor for BMP ligands, serving to enhance ligand binding by differentially regulating BMPR1A/ALK3 and BMPR1B/ALK6 receptor trafficking. Promotes epithelial cell adhesion, focal adhesion formation and integrin signaling during epithelial cell spreading on fibronectin. By interacting with the scaffolding protein beta-arrestin2/ARRB2, regulates migration or actin cytoskeleton and promotes the activation of CDC42 as well as the inhibition of NF-kappa-B (By similarity). In gonadotrope cells, acts as an inhibin A coreceptor and regulates follicle-stimulating hormone (FSH) levels and female fertility (By similarity). Plays a role in the inhibition of directed and random cell migration in epithelial cells by altering the actin cytoskeletal organization (By similarity). Participates in epithelial-mesenchymal transformation (EMT) upon binding to BMP2 or TGFB2, by activating the PAR6/SMURF1/RHOA pathway (By similarity).</text>
</comment>
<comment type="subunit">
    <text evidence="3">Forms homodimers and homooligomers. Interacts with DYNLT4. Interacts with integrin ITGA5:ITGB1; this interaction promotes the internalization and trafficking of ITGA5:ITGB1 into endocytic vesicles. Interacts with TGFB1, BMP2, BMP5, BMP7 or GDF5 and inhibin A via the ligand binding domains. Interacts with ALK3/BMPR1A; this interaction results in the cell surface retention of BMPR1A. Interacts with ALK6/BMPR1B; this interaction enhances BMPR1B-mediated stimulation of the BMP signaling pathway. Interacts with the scaffolding protein beta-arrestin2/ARRB2; this interaction mediates internalization of TGFBR3 and thus regulates migration, actin cytoskeleton and activation of CDC42.</text>
</comment>
<comment type="subcellular location">
    <subcellularLocation>
        <location evidence="10">Cell membrane</location>
        <topology evidence="4">Single-pass type I membrane protein</topology>
    </subcellularLocation>
    <subcellularLocation>
        <location evidence="7">Secreted</location>
    </subcellularLocation>
    <subcellularLocation>
        <location evidence="10">Secreted</location>
        <location evidence="10">Extracellular space</location>
        <location evidence="10">Extracellular matrix</location>
    </subcellularLocation>
    <text evidence="10">Exists both as a membrane-bound form and as soluble form in serum and in the extracellular matrix.</text>
</comment>
<comment type="PTM">
    <text evidence="3">Extensively modified by glycosaminoglycan groups (GAG).</text>
</comment>
<comment type="PTM">
    <text evidence="3">Phosphorylated in the cytoplasmic domain by the type II receptor TGFBR2 at THR-842 to mediate recruitment of ARRB2 and subsequent internalization of TGFBR2 and TGFBR3.</text>
</comment>
<organism>
    <name type="scientific">Rattus norvegicus</name>
    <name type="common">Rat</name>
    <dbReference type="NCBI Taxonomy" id="10116"/>
    <lineage>
        <taxon>Eukaryota</taxon>
        <taxon>Metazoa</taxon>
        <taxon>Chordata</taxon>
        <taxon>Craniata</taxon>
        <taxon>Vertebrata</taxon>
        <taxon>Euteleostomi</taxon>
        <taxon>Mammalia</taxon>
        <taxon>Eutheria</taxon>
        <taxon>Euarchontoglires</taxon>
        <taxon>Glires</taxon>
        <taxon>Rodentia</taxon>
        <taxon>Myomorpha</taxon>
        <taxon>Muroidea</taxon>
        <taxon>Muridae</taxon>
        <taxon>Murinae</taxon>
        <taxon>Rattus</taxon>
    </lineage>
</organism>
<proteinExistence type="evidence at protein level"/>
<sequence length="853" mass="94103">MAVTSHHMIPVMVVLMSACLATAGPEPSTRCELSPINASHPVQALMESFTVLSGCASRGTTGLPREVHVLNLRSTDQGPGQRQREVTLHLNPIASVHTHHKPIVFLLNSPQPLVWHLKTERLAAGVPRLFLVSEGSVVQFPSGNFSLTAETEERNFPQENEHLLRWAQKEYGAVTSFTELKIARNIYIKVGEDQVFPPTCNIGKNFLSLNYLAEYLQPKAAEGCVLPSQPHEKEVHIIELITPSSNPYSAFQVDIIVDIRPAQEDPEVVKNLVLILKCKKSVNWVIKSFDVKGNLKVIAPNSIGFGKESERSMTMTKLVRDDIPSTQENLMKWALDNGYRPVTSYTMAPVANRFHLRLENNEEMRDEEVHTIPPELRILLDPDHPPALDNPLFPGEGSPNGGLPFPFPDIPRRGWKEGEDRIPRPKQPIVPSVQLLPDHREPEEVQGGVDIALSVKCDHEKMVVAVDKDSFQTNGYSGMELTLLDPSCKAKMNGTHFVLESPLNGCGTRHRRSTPDGVVYYNSIVVQAPSPGDSSGWPDGYEDLESGDNGFPGDGDEGETAPLSRAGVVVFNCSLRQLRNPSGFQGQLDGNATFNMELYNTDLFLVPSPGVFSVAENEHVYVEVSVTKADQDLGFAIQTCFLSPYSNPDRMSDYTIIENICPKDDSVKFYSSKRVHFPIPHAEVDKKRFSFLFKSVFNTSLLFLHCELTLCSRKKGSLKLPRCVTPDDACTSLDATMIWTMMQNKKTFTKPLAVVLQVDYKENVPSTKDSSPIPPPPPQIFHGLDTLTVMGIAFAAFVIGALLTGALWYIYSHTGETARRQQVPTSPPASENSSAAHSIGSTQSTPCSSSSTA</sequence>
<feature type="signal peptide" evidence="4">
    <location>
        <begin position="1"/>
        <end position="23"/>
    </location>
</feature>
<feature type="chain" id="PRO_0000041666" description="Transforming growth factor beta receptor type 3">
    <location>
        <begin position="24"/>
        <end position="853"/>
    </location>
</feature>
<feature type="topological domain" description="Extracellular" evidence="4">
    <location>
        <begin position="24"/>
        <end position="789"/>
    </location>
</feature>
<feature type="transmembrane region" description="Helical" evidence="4">
    <location>
        <begin position="790"/>
        <end position="811"/>
    </location>
</feature>
<feature type="topological domain" description="Cytoplasmic" evidence="4">
    <location>
        <begin position="812"/>
        <end position="853"/>
    </location>
</feature>
<feature type="domain" description="ZP" evidence="5">
    <location>
        <begin position="456"/>
        <end position="730"/>
    </location>
</feature>
<feature type="region of interest" description="Disordered" evidence="6">
    <location>
        <begin position="530"/>
        <end position="559"/>
    </location>
</feature>
<feature type="region of interest" description="Interaction with TGF-beta ligand" evidence="1">
    <location>
        <begin position="737"/>
        <end position="751"/>
    </location>
</feature>
<feature type="region of interest" description="Disordered" evidence="6">
    <location>
        <begin position="820"/>
        <end position="853"/>
    </location>
</feature>
<feature type="compositionally biased region" description="Polar residues" evidence="6">
    <location>
        <begin position="820"/>
        <end position="836"/>
    </location>
</feature>
<feature type="compositionally biased region" description="Low complexity" evidence="6">
    <location>
        <begin position="838"/>
        <end position="853"/>
    </location>
</feature>
<feature type="modified residue" description="Phosphothreonine" evidence="3">
    <location>
        <position position="842"/>
    </location>
</feature>
<feature type="glycosylation site" description="N-linked (GlcNAc...) asparagine" evidence="4">
    <location>
        <position position="37"/>
    </location>
</feature>
<feature type="glycosylation site" description="N-linked (GlcNAc...) asparagine" evidence="4">
    <location>
        <position position="144"/>
    </location>
</feature>
<feature type="glycosylation site" description="N-linked (GlcNAc...) asparagine" evidence="4">
    <location>
        <position position="493"/>
    </location>
</feature>
<feature type="glycosylation site" description="O-linked (Xyl...) (glycosaminoglycan) serine" evidence="1">
    <location>
        <position position="535"/>
    </location>
</feature>
<feature type="glycosylation site" description="O-linked (Xyl...) (glycosaminoglycan) serine" evidence="1">
    <location>
        <position position="546"/>
    </location>
</feature>
<feature type="glycosylation site" description="N-linked (GlcNAc...) asparagine" evidence="4">
    <location>
        <position position="572"/>
    </location>
</feature>
<feature type="glycosylation site" description="N-linked (GlcNAc...) asparagine" evidence="8">
    <location>
        <position position="591"/>
    </location>
</feature>
<feature type="glycosylation site" description="N-linked (GlcNAc...) asparagine" evidence="8">
    <location>
        <position position="698"/>
    </location>
</feature>
<feature type="disulfide bond" evidence="3">
    <location>
        <begin position="55"/>
        <end position="200"/>
    </location>
</feature>
<feature type="disulfide bond" evidence="8">
    <location>
        <begin position="640"/>
        <end position="706"/>
    </location>
</feature>
<feature type="disulfide bond" evidence="8">
    <location>
        <begin position="661"/>
        <end position="730"/>
    </location>
</feature>
<feature type="disulfide bond" evidence="2">
    <location>
        <begin position="711"/>
        <end position="723"/>
    </location>
</feature>
<feature type="sequence conflict" description="In Ref. 2; AAA42236." evidence="9" ref="2">
    <original>L</original>
    <variation>V</variation>
    <location>
        <position position="164"/>
    </location>
</feature>
<feature type="strand" evidence="12">
    <location>
        <begin position="593"/>
        <end position="601"/>
    </location>
</feature>
<feature type="strand" evidence="12">
    <location>
        <begin position="610"/>
        <end position="614"/>
    </location>
</feature>
<feature type="strand" evidence="12">
    <location>
        <begin position="619"/>
        <end position="627"/>
    </location>
</feature>
<feature type="strand" evidence="12">
    <location>
        <begin position="633"/>
        <end position="644"/>
    </location>
</feature>
<feature type="strand" evidence="12">
    <location>
        <begin position="653"/>
        <end position="662"/>
    </location>
</feature>
<feature type="strand" evidence="12">
    <location>
        <begin position="668"/>
        <end position="670"/>
    </location>
</feature>
<feature type="turn" evidence="11">
    <location>
        <begin position="678"/>
        <end position="681"/>
    </location>
</feature>
<feature type="strand" evidence="12">
    <location>
        <begin position="685"/>
        <end position="692"/>
    </location>
</feature>
<feature type="strand" evidence="12">
    <location>
        <begin position="700"/>
        <end position="714"/>
    </location>
</feature>
<feature type="turn" evidence="12">
    <location>
        <begin position="715"/>
        <end position="717"/>
    </location>
</feature>
<feature type="strand" evidence="12">
    <location>
        <begin position="718"/>
        <end position="720"/>
    </location>
</feature>
<feature type="helix" evidence="12">
    <location>
        <begin position="726"/>
        <end position="731"/>
    </location>
</feature>
<feature type="helix" evidence="12">
    <location>
        <begin position="735"/>
        <end position="741"/>
    </location>
</feature>
<feature type="strand" evidence="12">
    <location>
        <begin position="744"/>
        <end position="754"/>
    </location>
</feature>